<name>PYRG_DESPS</name>
<protein>
    <recommendedName>
        <fullName evidence="1">CTP synthase</fullName>
        <ecNumber evidence="1">6.3.4.2</ecNumber>
    </recommendedName>
    <alternativeName>
        <fullName evidence="1">Cytidine 5'-triphosphate synthase</fullName>
    </alternativeName>
    <alternativeName>
        <fullName evidence="1">Cytidine triphosphate synthetase</fullName>
        <shortName evidence="1">CTP synthetase</shortName>
        <shortName evidence="1">CTPS</shortName>
    </alternativeName>
    <alternativeName>
        <fullName evidence="1">UTP--ammonia ligase</fullName>
    </alternativeName>
</protein>
<sequence length="551" mass="61383">MKNTTNTKRTKFIFVTGGVLSSLGKGLAAASIGALLESRGLSITFQKLDPYINVDPGTMNPFQHGEVYVTDDGAETDLDMGHYERFTNAVMGQKNNFTSGRIYHTVINKERRGEYLGGTVQVIPHITDEIKKSVRQLDGSVDIAIIEIGGTVGDIEGLPFIEAIRQLRGDLGRDYTLFIHLTLVPYIKTAGEVKTKPTQHSVRELRADGIQPDILVCRTEVPLEENIKAKIALFCDVQQDAVINCVDVDSIYKLPIALHAEGLDSKILELLNIWTANPNIKPWQDLVENIQNPKNEVTIAITGKYVDLTEAYKSLHEALIHGGLANHTKVKLRYVSAEDLESGDPDSYLKGCDGILVPGGFGRRGVEGKIKAITYARENRIPFFGICLGMQLAVVEFARNMAGMSEAHSTELEPNSPDPVIYLTKEWFDYRTNKIQRRDENSDLGGTLRLGAYPCVLQQESHAGDAYGTQEVFERHRHRFEFNNDYRQQLIEKGLVISGTSPDGDLVEIVEIEDHPWFVGCQFHPEFKSKPMQAHPLFRDFISAAVANKKG</sequence>
<organism>
    <name type="scientific">Desulfotalea psychrophila (strain LSv54 / DSM 12343)</name>
    <dbReference type="NCBI Taxonomy" id="177439"/>
    <lineage>
        <taxon>Bacteria</taxon>
        <taxon>Pseudomonadati</taxon>
        <taxon>Thermodesulfobacteriota</taxon>
        <taxon>Desulfobulbia</taxon>
        <taxon>Desulfobulbales</taxon>
        <taxon>Desulfocapsaceae</taxon>
        <taxon>Desulfotalea</taxon>
    </lineage>
</organism>
<dbReference type="EC" id="6.3.4.2" evidence="1"/>
<dbReference type="EMBL" id="CR522870">
    <property type="protein sequence ID" value="CAG35495.1"/>
    <property type="molecule type" value="Genomic_DNA"/>
</dbReference>
<dbReference type="RefSeq" id="WP_011188011.1">
    <property type="nucleotide sequence ID" value="NC_006138.1"/>
</dbReference>
<dbReference type="SMR" id="Q6AQ78"/>
<dbReference type="STRING" id="177439.DP0766"/>
<dbReference type="KEGG" id="dps:DP0766"/>
<dbReference type="eggNOG" id="COG0504">
    <property type="taxonomic scope" value="Bacteria"/>
</dbReference>
<dbReference type="HOGENOM" id="CLU_011675_5_0_7"/>
<dbReference type="OrthoDB" id="9801107at2"/>
<dbReference type="UniPathway" id="UPA00159">
    <property type="reaction ID" value="UER00277"/>
</dbReference>
<dbReference type="Proteomes" id="UP000000602">
    <property type="component" value="Chromosome"/>
</dbReference>
<dbReference type="GO" id="GO:0005829">
    <property type="term" value="C:cytosol"/>
    <property type="evidence" value="ECO:0007669"/>
    <property type="project" value="TreeGrafter"/>
</dbReference>
<dbReference type="GO" id="GO:0005524">
    <property type="term" value="F:ATP binding"/>
    <property type="evidence" value="ECO:0007669"/>
    <property type="project" value="UniProtKB-KW"/>
</dbReference>
<dbReference type="GO" id="GO:0003883">
    <property type="term" value="F:CTP synthase activity"/>
    <property type="evidence" value="ECO:0007669"/>
    <property type="project" value="UniProtKB-UniRule"/>
</dbReference>
<dbReference type="GO" id="GO:0004359">
    <property type="term" value="F:glutaminase activity"/>
    <property type="evidence" value="ECO:0007669"/>
    <property type="project" value="RHEA"/>
</dbReference>
<dbReference type="GO" id="GO:0042802">
    <property type="term" value="F:identical protein binding"/>
    <property type="evidence" value="ECO:0007669"/>
    <property type="project" value="TreeGrafter"/>
</dbReference>
<dbReference type="GO" id="GO:0046872">
    <property type="term" value="F:metal ion binding"/>
    <property type="evidence" value="ECO:0007669"/>
    <property type="project" value="UniProtKB-KW"/>
</dbReference>
<dbReference type="GO" id="GO:0044210">
    <property type="term" value="P:'de novo' CTP biosynthetic process"/>
    <property type="evidence" value="ECO:0007669"/>
    <property type="project" value="UniProtKB-UniRule"/>
</dbReference>
<dbReference type="GO" id="GO:0019856">
    <property type="term" value="P:pyrimidine nucleobase biosynthetic process"/>
    <property type="evidence" value="ECO:0007669"/>
    <property type="project" value="TreeGrafter"/>
</dbReference>
<dbReference type="CDD" id="cd03113">
    <property type="entry name" value="CTPS_N"/>
    <property type="match status" value="1"/>
</dbReference>
<dbReference type="CDD" id="cd01746">
    <property type="entry name" value="GATase1_CTP_Synthase"/>
    <property type="match status" value="1"/>
</dbReference>
<dbReference type="FunFam" id="3.40.50.300:FF:000009">
    <property type="entry name" value="CTP synthase"/>
    <property type="match status" value="1"/>
</dbReference>
<dbReference type="FunFam" id="3.40.50.880:FF:000002">
    <property type="entry name" value="CTP synthase"/>
    <property type="match status" value="1"/>
</dbReference>
<dbReference type="Gene3D" id="3.40.50.880">
    <property type="match status" value="1"/>
</dbReference>
<dbReference type="Gene3D" id="3.40.50.300">
    <property type="entry name" value="P-loop containing nucleotide triphosphate hydrolases"/>
    <property type="match status" value="1"/>
</dbReference>
<dbReference type="HAMAP" id="MF_01227">
    <property type="entry name" value="PyrG"/>
    <property type="match status" value="1"/>
</dbReference>
<dbReference type="InterPro" id="IPR029062">
    <property type="entry name" value="Class_I_gatase-like"/>
</dbReference>
<dbReference type="InterPro" id="IPR004468">
    <property type="entry name" value="CTP_synthase"/>
</dbReference>
<dbReference type="InterPro" id="IPR017456">
    <property type="entry name" value="CTP_synthase_N"/>
</dbReference>
<dbReference type="InterPro" id="IPR017926">
    <property type="entry name" value="GATASE"/>
</dbReference>
<dbReference type="InterPro" id="IPR033828">
    <property type="entry name" value="GATase1_CTP_Synthase"/>
</dbReference>
<dbReference type="InterPro" id="IPR027417">
    <property type="entry name" value="P-loop_NTPase"/>
</dbReference>
<dbReference type="NCBIfam" id="NF003792">
    <property type="entry name" value="PRK05380.1"/>
    <property type="match status" value="1"/>
</dbReference>
<dbReference type="NCBIfam" id="TIGR00337">
    <property type="entry name" value="PyrG"/>
    <property type="match status" value="1"/>
</dbReference>
<dbReference type="PANTHER" id="PTHR11550">
    <property type="entry name" value="CTP SYNTHASE"/>
    <property type="match status" value="1"/>
</dbReference>
<dbReference type="PANTHER" id="PTHR11550:SF0">
    <property type="entry name" value="CTP SYNTHASE-RELATED"/>
    <property type="match status" value="1"/>
</dbReference>
<dbReference type="Pfam" id="PF06418">
    <property type="entry name" value="CTP_synth_N"/>
    <property type="match status" value="1"/>
</dbReference>
<dbReference type="Pfam" id="PF00117">
    <property type="entry name" value="GATase"/>
    <property type="match status" value="1"/>
</dbReference>
<dbReference type="SUPFAM" id="SSF52317">
    <property type="entry name" value="Class I glutamine amidotransferase-like"/>
    <property type="match status" value="1"/>
</dbReference>
<dbReference type="SUPFAM" id="SSF52540">
    <property type="entry name" value="P-loop containing nucleoside triphosphate hydrolases"/>
    <property type="match status" value="1"/>
</dbReference>
<dbReference type="PROSITE" id="PS51273">
    <property type="entry name" value="GATASE_TYPE_1"/>
    <property type="match status" value="1"/>
</dbReference>
<gene>
    <name evidence="1" type="primary">pyrG</name>
    <name type="ordered locus">DP0766</name>
</gene>
<proteinExistence type="inferred from homology"/>
<keyword id="KW-0067">ATP-binding</keyword>
<keyword id="KW-0315">Glutamine amidotransferase</keyword>
<keyword id="KW-0436">Ligase</keyword>
<keyword id="KW-0460">Magnesium</keyword>
<keyword id="KW-0479">Metal-binding</keyword>
<keyword id="KW-0547">Nucleotide-binding</keyword>
<keyword id="KW-0665">Pyrimidine biosynthesis</keyword>
<keyword id="KW-1185">Reference proteome</keyword>
<evidence type="ECO:0000255" key="1">
    <source>
        <dbReference type="HAMAP-Rule" id="MF_01227"/>
    </source>
</evidence>
<reference key="1">
    <citation type="journal article" date="2004" name="Environ. Microbiol.">
        <title>The genome of Desulfotalea psychrophila, a sulfate-reducing bacterium from permanently cold Arctic sediments.</title>
        <authorList>
            <person name="Rabus R."/>
            <person name="Ruepp A."/>
            <person name="Frickey T."/>
            <person name="Rattei T."/>
            <person name="Fartmann B."/>
            <person name="Stark M."/>
            <person name="Bauer M."/>
            <person name="Zibat A."/>
            <person name="Lombardot T."/>
            <person name="Becker I."/>
            <person name="Amann J."/>
            <person name="Gellner K."/>
            <person name="Teeling H."/>
            <person name="Leuschner W.D."/>
            <person name="Gloeckner F.-O."/>
            <person name="Lupas A.N."/>
            <person name="Amann R."/>
            <person name="Klenk H.-P."/>
        </authorList>
    </citation>
    <scope>NUCLEOTIDE SEQUENCE [LARGE SCALE GENOMIC DNA]</scope>
    <source>
        <strain>DSM 12343 / LSv54</strain>
    </source>
</reference>
<feature type="chain" id="PRO_0000266108" description="CTP synthase">
    <location>
        <begin position="1"/>
        <end position="551"/>
    </location>
</feature>
<feature type="domain" description="Glutamine amidotransferase type-1" evidence="1">
    <location>
        <begin position="298"/>
        <end position="551"/>
    </location>
</feature>
<feature type="region of interest" description="Amidoligase domain" evidence="1">
    <location>
        <begin position="1"/>
        <end position="273"/>
    </location>
</feature>
<feature type="active site" description="Nucleophile; for glutamine hydrolysis" evidence="1">
    <location>
        <position position="387"/>
    </location>
</feature>
<feature type="active site" evidence="1">
    <location>
        <position position="524"/>
    </location>
</feature>
<feature type="active site" evidence="1">
    <location>
        <position position="526"/>
    </location>
</feature>
<feature type="binding site" evidence="1">
    <location>
        <position position="21"/>
    </location>
    <ligand>
        <name>CTP</name>
        <dbReference type="ChEBI" id="CHEBI:37563"/>
        <note>allosteric inhibitor</note>
    </ligand>
</feature>
<feature type="binding site" evidence="1">
    <location>
        <position position="21"/>
    </location>
    <ligand>
        <name>UTP</name>
        <dbReference type="ChEBI" id="CHEBI:46398"/>
    </ligand>
</feature>
<feature type="binding site" evidence="1">
    <location>
        <begin position="22"/>
        <end position="27"/>
    </location>
    <ligand>
        <name>ATP</name>
        <dbReference type="ChEBI" id="CHEBI:30616"/>
    </ligand>
</feature>
<feature type="binding site" evidence="1">
    <location>
        <position position="79"/>
    </location>
    <ligand>
        <name>ATP</name>
        <dbReference type="ChEBI" id="CHEBI:30616"/>
    </ligand>
</feature>
<feature type="binding site" evidence="1">
    <location>
        <position position="79"/>
    </location>
    <ligand>
        <name>Mg(2+)</name>
        <dbReference type="ChEBI" id="CHEBI:18420"/>
    </ligand>
</feature>
<feature type="binding site" evidence="1">
    <location>
        <position position="147"/>
    </location>
    <ligand>
        <name>Mg(2+)</name>
        <dbReference type="ChEBI" id="CHEBI:18420"/>
    </ligand>
</feature>
<feature type="binding site" evidence="1">
    <location>
        <begin position="154"/>
        <end position="156"/>
    </location>
    <ligand>
        <name>CTP</name>
        <dbReference type="ChEBI" id="CHEBI:37563"/>
        <note>allosteric inhibitor</note>
    </ligand>
</feature>
<feature type="binding site" evidence="1">
    <location>
        <begin position="194"/>
        <end position="199"/>
    </location>
    <ligand>
        <name>CTP</name>
        <dbReference type="ChEBI" id="CHEBI:37563"/>
        <note>allosteric inhibitor</note>
    </ligand>
</feature>
<feature type="binding site" evidence="1">
    <location>
        <begin position="194"/>
        <end position="199"/>
    </location>
    <ligand>
        <name>UTP</name>
        <dbReference type="ChEBI" id="CHEBI:46398"/>
    </ligand>
</feature>
<feature type="binding site" evidence="1">
    <location>
        <position position="230"/>
    </location>
    <ligand>
        <name>CTP</name>
        <dbReference type="ChEBI" id="CHEBI:37563"/>
        <note>allosteric inhibitor</note>
    </ligand>
</feature>
<feature type="binding site" evidence="1">
    <location>
        <position position="230"/>
    </location>
    <ligand>
        <name>UTP</name>
        <dbReference type="ChEBI" id="CHEBI:46398"/>
    </ligand>
</feature>
<feature type="binding site" evidence="1">
    <location>
        <position position="360"/>
    </location>
    <ligand>
        <name>L-glutamine</name>
        <dbReference type="ChEBI" id="CHEBI:58359"/>
    </ligand>
</feature>
<feature type="binding site" evidence="1">
    <location>
        <begin position="388"/>
        <end position="391"/>
    </location>
    <ligand>
        <name>L-glutamine</name>
        <dbReference type="ChEBI" id="CHEBI:58359"/>
    </ligand>
</feature>
<feature type="binding site" evidence="1">
    <location>
        <position position="411"/>
    </location>
    <ligand>
        <name>L-glutamine</name>
        <dbReference type="ChEBI" id="CHEBI:58359"/>
    </ligand>
</feature>
<feature type="binding site" evidence="1">
    <location>
        <position position="479"/>
    </location>
    <ligand>
        <name>L-glutamine</name>
        <dbReference type="ChEBI" id="CHEBI:58359"/>
    </ligand>
</feature>
<comment type="function">
    <text evidence="1">Catalyzes the ATP-dependent amination of UTP to CTP with either L-glutamine or ammonia as the source of nitrogen. Regulates intracellular CTP levels through interactions with the four ribonucleotide triphosphates.</text>
</comment>
<comment type="catalytic activity">
    <reaction evidence="1">
        <text>UTP + L-glutamine + ATP + H2O = CTP + L-glutamate + ADP + phosphate + 2 H(+)</text>
        <dbReference type="Rhea" id="RHEA:26426"/>
        <dbReference type="ChEBI" id="CHEBI:15377"/>
        <dbReference type="ChEBI" id="CHEBI:15378"/>
        <dbReference type="ChEBI" id="CHEBI:29985"/>
        <dbReference type="ChEBI" id="CHEBI:30616"/>
        <dbReference type="ChEBI" id="CHEBI:37563"/>
        <dbReference type="ChEBI" id="CHEBI:43474"/>
        <dbReference type="ChEBI" id="CHEBI:46398"/>
        <dbReference type="ChEBI" id="CHEBI:58359"/>
        <dbReference type="ChEBI" id="CHEBI:456216"/>
        <dbReference type="EC" id="6.3.4.2"/>
    </reaction>
</comment>
<comment type="catalytic activity">
    <reaction evidence="1">
        <text>L-glutamine + H2O = L-glutamate + NH4(+)</text>
        <dbReference type="Rhea" id="RHEA:15889"/>
        <dbReference type="ChEBI" id="CHEBI:15377"/>
        <dbReference type="ChEBI" id="CHEBI:28938"/>
        <dbReference type="ChEBI" id="CHEBI:29985"/>
        <dbReference type="ChEBI" id="CHEBI:58359"/>
    </reaction>
</comment>
<comment type="catalytic activity">
    <reaction evidence="1">
        <text>UTP + NH4(+) + ATP = CTP + ADP + phosphate + 2 H(+)</text>
        <dbReference type="Rhea" id="RHEA:16597"/>
        <dbReference type="ChEBI" id="CHEBI:15378"/>
        <dbReference type="ChEBI" id="CHEBI:28938"/>
        <dbReference type="ChEBI" id="CHEBI:30616"/>
        <dbReference type="ChEBI" id="CHEBI:37563"/>
        <dbReference type="ChEBI" id="CHEBI:43474"/>
        <dbReference type="ChEBI" id="CHEBI:46398"/>
        <dbReference type="ChEBI" id="CHEBI:456216"/>
    </reaction>
</comment>
<comment type="activity regulation">
    <text evidence="1">Allosterically activated by GTP, when glutamine is the substrate; GTP has no effect on the reaction when ammonia is the substrate. The allosteric effector GTP functions by stabilizing the protein conformation that binds the tetrahedral intermediate(s) formed during glutamine hydrolysis. Inhibited by the product CTP, via allosteric rather than competitive inhibition.</text>
</comment>
<comment type="pathway">
    <text evidence="1">Pyrimidine metabolism; CTP biosynthesis via de novo pathway; CTP from UDP: step 2/2.</text>
</comment>
<comment type="subunit">
    <text evidence="1">Homotetramer.</text>
</comment>
<comment type="miscellaneous">
    <text evidence="1">CTPSs have evolved a hybrid strategy for distinguishing between UTP and CTP. The overlapping regions of the product feedback inhibitory and substrate sites recognize a common feature in both compounds, the triphosphate moiety. To differentiate isosteric substrate and product pyrimidine rings, an additional pocket far from the expected kinase/ligase catalytic site, specifically recognizes the cytosine and ribose portions of the product inhibitor.</text>
</comment>
<comment type="similarity">
    <text evidence="1">Belongs to the CTP synthase family.</text>
</comment>
<accession>Q6AQ78</accession>